<name>NADA_ECO55</name>
<accession>B7LAF1</accession>
<comment type="function">
    <text evidence="1">Catalyzes the condensation of iminoaspartate with dihydroxyacetone phosphate to form quinolinate.</text>
</comment>
<comment type="catalytic activity">
    <reaction evidence="1">
        <text>iminosuccinate + dihydroxyacetone phosphate = quinolinate + phosphate + 2 H2O + H(+)</text>
        <dbReference type="Rhea" id="RHEA:25888"/>
        <dbReference type="ChEBI" id="CHEBI:15377"/>
        <dbReference type="ChEBI" id="CHEBI:15378"/>
        <dbReference type="ChEBI" id="CHEBI:29959"/>
        <dbReference type="ChEBI" id="CHEBI:43474"/>
        <dbReference type="ChEBI" id="CHEBI:57642"/>
        <dbReference type="ChEBI" id="CHEBI:77875"/>
        <dbReference type="EC" id="2.5.1.72"/>
    </reaction>
    <physiologicalReaction direction="left-to-right" evidence="1">
        <dbReference type="Rhea" id="RHEA:25889"/>
    </physiologicalReaction>
</comment>
<comment type="cofactor">
    <cofactor evidence="1">
        <name>[4Fe-4S] cluster</name>
        <dbReference type="ChEBI" id="CHEBI:49883"/>
    </cofactor>
    <text evidence="1">Binds 1 [4Fe-4S] cluster per subunit.</text>
</comment>
<comment type="pathway">
    <text evidence="1">Cofactor biosynthesis; NAD(+) biosynthesis; quinolinate from iminoaspartate: step 1/1.</text>
</comment>
<comment type="subcellular location">
    <subcellularLocation>
        <location evidence="1">Cytoplasm</location>
    </subcellularLocation>
</comment>
<comment type="similarity">
    <text evidence="1">Belongs to the quinolinate synthase family. Type 1 subfamily.</text>
</comment>
<keyword id="KW-0004">4Fe-4S</keyword>
<keyword id="KW-0963">Cytoplasm</keyword>
<keyword id="KW-0408">Iron</keyword>
<keyword id="KW-0411">Iron-sulfur</keyword>
<keyword id="KW-0479">Metal-binding</keyword>
<keyword id="KW-0662">Pyridine nucleotide biosynthesis</keyword>
<keyword id="KW-1185">Reference proteome</keyword>
<keyword id="KW-0808">Transferase</keyword>
<evidence type="ECO:0000255" key="1">
    <source>
        <dbReference type="HAMAP-Rule" id="MF_00567"/>
    </source>
</evidence>
<organism>
    <name type="scientific">Escherichia coli (strain 55989 / EAEC)</name>
    <dbReference type="NCBI Taxonomy" id="585055"/>
    <lineage>
        <taxon>Bacteria</taxon>
        <taxon>Pseudomonadati</taxon>
        <taxon>Pseudomonadota</taxon>
        <taxon>Gammaproteobacteria</taxon>
        <taxon>Enterobacterales</taxon>
        <taxon>Enterobacteriaceae</taxon>
        <taxon>Escherichia</taxon>
    </lineage>
</organism>
<dbReference type="EC" id="2.5.1.72" evidence="1"/>
<dbReference type="EMBL" id="CU928145">
    <property type="protein sequence ID" value="CAU96597.1"/>
    <property type="molecule type" value="Genomic_DNA"/>
</dbReference>
<dbReference type="RefSeq" id="WP_000115295.1">
    <property type="nucleotide sequence ID" value="NC_011748.1"/>
</dbReference>
<dbReference type="SMR" id="B7LAF1"/>
<dbReference type="GeneID" id="75204865"/>
<dbReference type="KEGG" id="eck:EC55989_0729"/>
<dbReference type="HOGENOM" id="CLU_047382_1_0_6"/>
<dbReference type="UniPathway" id="UPA00253">
    <property type="reaction ID" value="UER00327"/>
</dbReference>
<dbReference type="Proteomes" id="UP000000746">
    <property type="component" value="Chromosome"/>
</dbReference>
<dbReference type="GO" id="GO:0005829">
    <property type="term" value="C:cytosol"/>
    <property type="evidence" value="ECO:0007669"/>
    <property type="project" value="TreeGrafter"/>
</dbReference>
<dbReference type="GO" id="GO:0051539">
    <property type="term" value="F:4 iron, 4 sulfur cluster binding"/>
    <property type="evidence" value="ECO:0007669"/>
    <property type="project" value="UniProtKB-KW"/>
</dbReference>
<dbReference type="GO" id="GO:0046872">
    <property type="term" value="F:metal ion binding"/>
    <property type="evidence" value="ECO:0007669"/>
    <property type="project" value="UniProtKB-KW"/>
</dbReference>
<dbReference type="GO" id="GO:0008987">
    <property type="term" value="F:quinolinate synthetase A activity"/>
    <property type="evidence" value="ECO:0007669"/>
    <property type="project" value="UniProtKB-UniRule"/>
</dbReference>
<dbReference type="GO" id="GO:0034628">
    <property type="term" value="P:'de novo' NAD biosynthetic process from L-aspartate"/>
    <property type="evidence" value="ECO:0007669"/>
    <property type="project" value="TreeGrafter"/>
</dbReference>
<dbReference type="FunFam" id="3.40.50.10800:FF:000001">
    <property type="entry name" value="Quinolinate synthase A"/>
    <property type="match status" value="1"/>
</dbReference>
<dbReference type="FunFam" id="3.40.50.10800:FF:000003">
    <property type="entry name" value="Quinolinate synthase A"/>
    <property type="match status" value="1"/>
</dbReference>
<dbReference type="Gene3D" id="3.40.50.10800">
    <property type="entry name" value="NadA-like"/>
    <property type="match status" value="3"/>
</dbReference>
<dbReference type="HAMAP" id="MF_00567">
    <property type="entry name" value="NadA_type1"/>
    <property type="match status" value="1"/>
</dbReference>
<dbReference type="InterPro" id="IPR003473">
    <property type="entry name" value="NadA"/>
</dbReference>
<dbReference type="InterPro" id="IPR036094">
    <property type="entry name" value="NadA_sf"/>
</dbReference>
<dbReference type="InterPro" id="IPR023513">
    <property type="entry name" value="Quinolinate_synth_A_type1"/>
</dbReference>
<dbReference type="NCBIfam" id="TIGR00550">
    <property type="entry name" value="nadA"/>
    <property type="match status" value="1"/>
</dbReference>
<dbReference type="NCBIfam" id="NF006877">
    <property type="entry name" value="PRK09375.1-1"/>
    <property type="match status" value="1"/>
</dbReference>
<dbReference type="NCBIfam" id="NF006878">
    <property type="entry name" value="PRK09375.1-2"/>
    <property type="match status" value="1"/>
</dbReference>
<dbReference type="PANTHER" id="PTHR30573:SF0">
    <property type="entry name" value="QUINOLINATE SYNTHASE, CHLOROPLASTIC"/>
    <property type="match status" value="1"/>
</dbReference>
<dbReference type="PANTHER" id="PTHR30573">
    <property type="entry name" value="QUINOLINATE SYNTHETASE A"/>
    <property type="match status" value="1"/>
</dbReference>
<dbReference type="Pfam" id="PF02445">
    <property type="entry name" value="NadA"/>
    <property type="match status" value="1"/>
</dbReference>
<dbReference type="SUPFAM" id="SSF142754">
    <property type="entry name" value="NadA-like"/>
    <property type="match status" value="1"/>
</dbReference>
<sequence length="347" mass="38257">MSVMFDPDTAIYPFPPKPTPLSIDEKAYYREKIKRLLKERNAVMVAHYYTDPEIQQLAEETGGCISDSLEMARFGAKHPASTLLVAGVRFMGETAKILSPEKTILMPTLQAECSLDLGCPVEEFNAFCDAHPDRTVVVYANTSAAVKARADWVVTSSIAVELIDHLDSLGEKIIWAPDKHLGRYVQKQTGGDILCWQGACIVHDEFKTQALTRLQEEYPDAAILVHPESPQAIVDMADAVGSTSQLIAAAKTLPHQRLIVATDRGIFYKMQQAVPDKELLEAPTAGEGATCRSCAHCPWMAMNGLQSIAEALEQEGSNHEVHVDERLRERALVPLNRMLDFAATLRG</sequence>
<proteinExistence type="inferred from homology"/>
<reference key="1">
    <citation type="journal article" date="2009" name="PLoS Genet.">
        <title>Organised genome dynamics in the Escherichia coli species results in highly diverse adaptive paths.</title>
        <authorList>
            <person name="Touchon M."/>
            <person name="Hoede C."/>
            <person name="Tenaillon O."/>
            <person name="Barbe V."/>
            <person name="Baeriswyl S."/>
            <person name="Bidet P."/>
            <person name="Bingen E."/>
            <person name="Bonacorsi S."/>
            <person name="Bouchier C."/>
            <person name="Bouvet O."/>
            <person name="Calteau A."/>
            <person name="Chiapello H."/>
            <person name="Clermont O."/>
            <person name="Cruveiller S."/>
            <person name="Danchin A."/>
            <person name="Diard M."/>
            <person name="Dossat C."/>
            <person name="Karoui M.E."/>
            <person name="Frapy E."/>
            <person name="Garry L."/>
            <person name="Ghigo J.M."/>
            <person name="Gilles A.M."/>
            <person name="Johnson J."/>
            <person name="Le Bouguenec C."/>
            <person name="Lescat M."/>
            <person name="Mangenot S."/>
            <person name="Martinez-Jehanne V."/>
            <person name="Matic I."/>
            <person name="Nassif X."/>
            <person name="Oztas S."/>
            <person name="Petit M.A."/>
            <person name="Pichon C."/>
            <person name="Rouy Z."/>
            <person name="Ruf C.S."/>
            <person name="Schneider D."/>
            <person name="Tourret J."/>
            <person name="Vacherie B."/>
            <person name="Vallenet D."/>
            <person name="Medigue C."/>
            <person name="Rocha E.P.C."/>
            <person name="Denamur E."/>
        </authorList>
    </citation>
    <scope>NUCLEOTIDE SEQUENCE [LARGE SCALE GENOMIC DNA]</scope>
    <source>
        <strain>55989 / EAEC</strain>
    </source>
</reference>
<feature type="chain" id="PRO_1000146805" description="Quinolinate synthase">
    <location>
        <begin position="1"/>
        <end position="347"/>
    </location>
</feature>
<feature type="binding site" evidence="1">
    <location>
        <position position="47"/>
    </location>
    <ligand>
        <name>iminosuccinate</name>
        <dbReference type="ChEBI" id="CHEBI:77875"/>
    </ligand>
</feature>
<feature type="binding site" evidence="1">
    <location>
        <position position="68"/>
    </location>
    <ligand>
        <name>iminosuccinate</name>
        <dbReference type="ChEBI" id="CHEBI:77875"/>
    </ligand>
</feature>
<feature type="binding site" evidence="1">
    <location>
        <position position="113"/>
    </location>
    <ligand>
        <name>[4Fe-4S] cluster</name>
        <dbReference type="ChEBI" id="CHEBI:49883"/>
    </ligand>
</feature>
<feature type="binding site" evidence="1">
    <location>
        <begin position="139"/>
        <end position="141"/>
    </location>
    <ligand>
        <name>iminosuccinate</name>
        <dbReference type="ChEBI" id="CHEBI:77875"/>
    </ligand>
</feature>
<feature type="binding site" evidence="1">
    <location>
        <position position="156"/>
    </location>
    <ligand>
        <name>iminosuccinate</name>
        <dbReference type="ChEBI" id="CHEBI:77875"/>
    </ligand>
</feature>
<feature type="binding site" evidence="1">
    <location>
        <position position="200"/>
    </location>
    <ligand>
        <name>[4Fe-4S] cluster</name>
        <dbReference type="ChEBI" id="CHEBI:49883"/>
    </ligand>
</feature>
<feature type="binding site" evidence="1">
    <location>
        <begin position="226"/>
        <end position="228"/>
    </location>
    <ligand>
        <name>iminosuccinate</name>
        <dbReference type="ChEBI" id="CHEBI:77875"/>
    </ligand>
</feature>
<feature type="binding site" evidence="1">
    <location>
        <position position="243"/>
    </location>
    <ligand>
        <name>iminosuccinate</name>
        <dbReference type="ChEBI" id="CHEBI:77875"/>
    </ligand>
</feature>
<feature type="binding site" evidence="1">
    <location>
        <position position="297"/>
    </location>
    <ligand>
        <name>[4Fe-4S] cluster</name>
        <dbReference type="ChEBI" id="CHEBI:49883"/>
    </ligand>
</feature>
<protein>
    <recommendedName>
        <fullName evidence="1">Quinolinate synthase</fullName>
        <ecNumber evidence="1">2.5.1.72</ecNumber>
    </recommendedName>
</protein>
<gene>
    <name evidence="1" type="primary">nadA</name>
    <name type="ordered locus">EC55989_0729</name>
</gene>